<name>HIS2_PARL1</name>
<evidence type="ECO:0000255" key="1">
    <source>
        <dbReference type="HAMAP-Rule" id="MF_01020"/>
    </source>
</evidence>
<gene>
    <name evidence="1" type="primary">hisE</name>
    <name type="ordered locus">Plav_1230</name>
</gene>
<protein>
    <recommendedName>
        <fullName evidence="1">Phosphoribosyl-ATP pyrophosphatase</fullName>
        <shortName evidence="1">PRA-PH</shortName>
        <ecNumber evidence="1">3.6.1.31</ecNumber>
    </recommendedName>
</protein>
<dbReference type="EC" id="3.6.1.31" evidence="1"/>
<dbReference type="EMBL" id="CP000774">
    <property type="protein sequence ID" value="ABS62850.1"/>
    <property type="molecule type" value="Genomic_DNA"/>
</dbReference>
<dbReference type="RefSeq" id="WP_012110118.1">
    <property type="nucleotide sequence ID" value="NC_009719.1"/>
</dbReference>
<dbReference type="SMR" id="A7HSG7"/>
<dbReference type="STRING" id="402881.Plav_1230"/>
<dbReference type="KEGG" id="pla:Plav_1230"/>
<dbReference type="eggNOG" id="COG0140">
    <property type="taxonomic scope" value="Bacteria"/>
</dbReference>
<dbReference type="HOGENOM" id="CLU_123337_1_2_5"/>
<dbReference type="OrthoDB" id="9814738at2"/>
<dbReference type="UniPathway" id="UPA00031">
    <property type="reaction ID" value="UER00007"/>
</dbReference>
<dbReference type="Proteomes" id="UP000006377">
    <property type="component" value="Chromosome"/>
</dbReference>
<dbReference type="GO" id="GO:0005737">
    <property type="term" value="C:cytoplasm"/>
    <property type="evidence" value="ECO:0007669"/>
    <property type="project" value="UniProtKB-SubCell"/>
</dbReference>
<dbReference type="GO" id="GO:0005524">
    <property type="term" value="F:ATP binding"/>
    <property type="evidence" value="ECO:0007669"/>
    <property type="project" value="UniProtKB-KW"/>
</dbReference>
<dbReference type="GO" id="GO:0004636">
    <property type="term" value="F:phosphoribosyl-ATP diphosphatase activity"/>
    <property type="evidence" value="ECO:0007669"/>
    <property type="project" value="UniProtKB-UniRule"/>
</dbReference>
<dbReference type="GO" id="GO:0000105">
    <property type="term" value="P:L-histidine biosynthetic process"/>
    <property type="evidence" value="ECO:0007669"/>
    <property type="project" value="UniProtKB-UniRule"/>
</dbReference>
<dbReference type="CDD" id="cd11534">
    <property type="entry name" value="NTP-PPase_HisIE_like"/>
    <property type="match status" value="1"/>
</dbReference>
<dbReference type="Gene3D" id="1.10.287.1080">
    <property type="entry name" value="MazG-like"/>
    <property type="match status" value="1"/>
</dbReference>
<dbReference type="HAMAP" id="MF_01020">
    <property type="entry name" value="HisE"/>
    <property type="match status" value="1"/>
</dbReference>
<dbReference type="InterPro" id="IPR008179">
    <property type="entry name" value="HisE"/>
</dbReference>
<dbReference type="InterPro" id="IPR021130">
    <property type="entry name" value="PRib-ATP_PPHydrolase-like"/>
</dbReference>
<dbReference type="NCBIfam" id="TIGR03188">
    <property type="entry name" value="histidine_hisI"/>
    <property type="match status" value="1"/>
</dbReference>
<dbReference type="NCBIfam" id="NF001611">
    <property type="entry name" value="PRK00400.1-3"/>
    <property type="match status" value="1"/>
</dbReference>
<dbReference type="NCBIfam" id="NF001613">
    <property type="entry name" value="PRK00400.1-5"/>
    <property type="match status" value="1"/>
</dbReference>
<dbReference type="PANTHER" id="PTHR42945">
    <property type="entry name" value="HISTIDINE BIOSYNTHESIS BIFUNCTIONAL PROTEIN"/>
    <property type="match status" value="1"/>
</dbReference>
<dbReference type="PANTHER" id="PTHR42945:SF9">
    <property type="entry name" value="HISTIDINE BIOSYNTHESIS BIFUNCTIONAL PROTEIN HISIE"/>
    <property type="match status" value="1"/>
</dbReference>
<dbReference type="Pfam" id="PF01503">
    <property type="entry name" value="PRA-PH"/>
    <property type="match status" value="1"/>
</dbReference>
<dbReference type="SUPFAM" id="SSF101386">
    <property type="entry name" value="all-alpha NTP pyrophosphatases"/>
    <property type="match status" value="1"/>
</dbReference>
<reference key="1">
    <citation type="journal article" date="2011" name="Stand. Genomic Sci.">
        <title>Complete genome sequence of Parvibaculum lavamentivorans type strain (DS-1(T)).</title>
        <authorList>
            <person name="Schleheck D."/>
            <person name="Weiss M."/>
            <person name="Pitluck S."/>
            <person name="Bruce D."/>
            <person name="Land M.L."/>
            <person name="Han S."/>
            <person name="Saunders E."/>
            <person name="Tapia R."/>
            <person name="Detter C."/>
            <person name="Brettin T."/>
            <person name="Han J."/>
            <person name="Woyke T."/>
            <person name="Goodwin L."/>
            <person name="Pennacchio L."/>
            <person name="Nolan M."/>
            <person name="Cook A.M."/>
            <person name="Kjelleberg S."/>
            <person name="Thomas T."/>
        </authorList>
    </citation>
    <scope>NUCLEOTIDE SEQUENCE [LARGE SCALE GENOMIC DNA]</scope>
    <source>
        <strain>DS-1 / DSM 13023 / NCIMB 13966</strain>
    </source>
</reference>
<proteinExistence type="inferred from homology"/>
<organism>
    <name type="scientific">Parvibaculum lavamentivorans (strain DS-1 / DSM 13023 / NCIMB 13966)</name>
    <dbReference type="NCBI Taxonomy" id="402881"/>
    <lineage>
        <taxon>Bacteria</taxon>
        <taxon>Pseudomonadati</taxon>
        <taxon>Pseudomonadota</taxon>
        <taxon>Alphaproteobacteria</taxon>
        <taxon>Hyphomicrobiales</taxon>
        <taxon>Parvibaculaceae</taxon>
        <taxon>Parvibaculum</taxon>
    </lineage>
</organism>
<feature type="chain" id="PRO_0000319657" description="Phosphoribosyl-ATP pyrophosphatase">
    <location>
        <begin position="1"/>
        <end position="109"/>
    </location>
</feature>
<accession>A7HSG7</accession>
<keyword id="KW-0028">Amino-acid biosynthesis</keyword>
<keyword id="KW-0067">ATP-binding</keyword>
<keyword id="KW-0963">Cytoplasm</keyword>
<keyword id="KW-0368">Histidine biosynthesis</keyword>
<keyword id="KW-0378">Hydrolase</keyword>
<keyword id="KW-0547">Nucleotide-binding</keyword>
<keyword id="KW-1185">Reference proteome</keyword>
<sequence length="109" mass="11324">MAADASQLDRLFEVIAARKGADAGSSYTAKLLAKGVPACAQKLGEEAVETVIAAVSGDGGGVVSESADLLYHWLVLMAASNTDPADVYAELERREGRSGLTEKAARGER</sequence>
<comment type="catalytic activity">
    <reaction evidence="1">
        <text>1-(5-phospho-beta-D-ribosyl)-ATP + H2O = 1-(5-phospho-beta-D-ribosyl)-5'-AMP + diphosphate + H(+)</text>
        <dbReference type="Rhea" id="RHEA:22828"/>
        <dbReference type="ChEBI" id="CHEBI:15377"/>
        <dbReference type="ChEBI" id="CHEBI:15378"/>
        <dbReference type="ChEBI" id="CHEBI:33019"/>
        <dbReference type="ChEBI" id="CHEBI:59457"/>
        <dbReference type="ChEBI" id="CHEBI:73183"/>
        <dbReference type="EC" id="3.6.1.31"/>
    </reaction>
</comment>
<comment type="pathway">
    <text evidence="1">Amino-acid biosynthesis; L-histidine biosynthesis; L-histidine from 5-phospho-alpha-D-ribose 1-diphosphate: step 2/9.</text>
</comment>
<comment type="subcellular location">
    <subcellularLocation>
        <location evidence="1">Cytoplasm</location>
    </subcellularLocation>
</comment>
<comment type="similarity">
    <text evidence="1">Belongs to the PRA-PH family.</text>
</comment>